<proteinExistence type="predicted"/>
<name>REG2_PYRFU</name>
<reference key="1">
    <citation type="journal article" date="1999" name="Genetics">
        <title>Divergence of the hyperthermophilic archaea Pyrococcus furiosus and P. horikoshii inferred from complete genomic sequences.</title>
        <authorList>
            <person name="Maeder D.L."/>
            <person name="Weiss R.B."/>
            <person name="Dunn D.M."/>
            <person name="Cherry J.L."/>
            <person name="Gonzalez J.M."/>
            <person name="DiRuggiero J."/>
            <person name="Robb F.T."/>
        </authorList>
    </citation>
    <scope>NUCLEOTIDE SEQUENCE [LARGE SCALE GENOMIC DNA]</scope>
    <source>
        <strain>ATCC 43587 / DSM 3638 / JCM 8422 / Vc1</strain>
    </source>
</reference>
<gene>
    <name type="ordered locus">PF2053</name>
</gene>
<keyword id="KW-0238">DNA-binding</keyword>
<keyword id="KW-1185">Reference proteome</keyword>
<keyword id="KW-0804">Transcription</keyword>
<keyword id="KW-0805">Transcription regulation</keyword>
<sequence length="148" mass="17215">MRRMDKVDLQLIKILSQNSRLTYRELAEMLGTTRQRVARKVDKLKKLGIIRKFTIIPNLEKLNYMYAILLIKVKATENIYQVAKVLKDHEDVKILELGVGKYNIIAHVLVPKDIKKAQEKVNDVIKEINGIEDLEVEFVSDIPKFELL</sequence>
<dbReference type="EMBL" id="AE009950">
    <property type="protein sequence ID" value="AAL82177.1"/>
    <property type="molecule type" value="Genomic_DNA"/>
</dbReference>
<dbReference type="RefSeq" id="WP_011013199.1">
    <property type="nucleotide sequence ID" value="NZ_CP023154.1"/>
</dbReference>
<dbReference type="SMR" id="Q8TZE2"/>
<dbReference type="STRING" id="186497.PF2053"/>
<dbReference type="PaxDb" id="186497-PF2053"/>
<dbReference type="KEGG" id="pfu:PF2053"/>
<dbReference type="PATRIC" id="fig|186497.12.peg.2132"/>
<dbReference type="eggNOG" id="arCOG01581">
    <property type="taxonomic scope" value="Archaea"/>
</dbReference>
<dbReference type="HOGENOM" id="CLU_091233_5_4_2"/>
<dbReference type="OrthoDB" id="57033at2157"/>
<dbReference type="PhylomeDB" id="Q8TZE2"/>
<dbReference type="Proteomes" id="UP000001013">
    <property type="component" value="Chromosome"/>
</dbReference>
<dbReference type="GO" id="GO:0043565">
    <property type="term" value="F:sequence-specific DNA binding"/>
    <property type="evidence" value="ECO:0007669"/>
    <property type="project" value="InterPro"/>
</dbReference>
<dbReference type="Gene3D" id="3.30.70.920">
    <property type="match status" value="1"/>
</dbReference>
<dbReference type="Gene3D" id="1.10.10.10">
    <property type="entry name" value="Winged helix-like DNA-binding domain superfamily/Winged helix DNA-binding domain"/>
    <property type="match status" value="1"/>
</dbReference>
<dbReference type="InterPro" id="IPR000485">
    <property type="entry name" value="AsnC-type_HTH_dom"/>
</dbReference>
<dbReference type="InterPro" id="IPR011008">
    <property type="entry name" value="Dimeric_a/b-barrel"/>
</dbReference>
<dbReference type="InterPro" id="IPR050684">
    <property type="entry name" value="HTH-Siroheme_Decarb"/>
</dbReference>
<dbReference type="InterPro" id="IPR019888">
    <property type="entry name" value="Tscrpt_reg_AsnC-like"/>
</dbReference>
<dbReference type="InterPro" id="IPR036388">
    <property type="entry name" value="WH-like_DNA-bd_sf"/>
</dbReference>
<dbReference type="InterPro" id="IPR036390">
    <property type="entry name" value="WH_DNA-bd_sf"/>
</dbReference>
<dbReference type="PANTHER" id="PTHR43413:SF7">
    <property type="entry name" value="HTH-TYPE TRANSCRIPTIONAL REGULATOR PTR2"/>
    <property type="match status" value="1"/>
</dbReference>
<dbReference type="PANTHER" id="PTHR43413">
    <property type="entry name" value="TRANSCRIPTIONAL REGULATOR, ASNC FAMILY"/>
    <property type="match status" value="1"/>
</dbReference>
<dbReference type="Pfam" id="PF13412">
    <property type="entry name" value="HTH_24"/>
    <property type="match status" value="1"/>
</dbReference>
<dbReference type="PRINTS" id="PR00033">
    <property type="entry name" value="HTHASNC"/>
</dbReference>
<dbReference type="SMART" id="SM00344">
    <property type="entry name" value="HTH_ASNC"/>
    <property type="match status" value="1"/>
</dbReference>
<dbReference type="SUPFAM" id="SSF54909">
    <property type="entry name" value="Dimeric alpha+beta barrel"/>
    <property type="match status" value="1"/>
</dbReference>
<dbReference type="SUPFAM" id="SSF46785">
    <property type="entry name" value="Winged helix' DNA-binding domain"/>
    <property type="match status" value="1"/>
</dbReference>
<dbReference type="PROSITE" id="PS50956">
    <property type="entry name" value="HTH_ASNC_2"/>
    <property type="match status" value="1"/>
</dbReference>
<protein>
    <recommendedName>
        <fullName>Uncharacterized HTH-type transcriptional regulator PF2053</fullName>
    </recommendedName>
</protein>
<evidence type="ECO:0000255" key="1">
    <source>
        <dbReference type="PROSITE-ProRule" id="PRU00319"/>
    </source>
</evidence>
<feature type="chain" id="PRO_0000111758" description="Uncharacterized HTH-type transcriptional regulator PF2053">
    <location>
        <begin position="1"/>
        <end position="148"/>
    </location>
</feature>
<feature type="domain" description="HTH asnC-type" evidence="1">
    <location>
        <begin position="4"/>
        <end position="65"/>
    </location>
</feature>
<feature type="DNA-binding region" description="H-T-H motif" evidence="1">
    <location>
        <begin position="23"/>
        <end position="42"/>
    </location>
</feature>
<organism>
    <name type="scientific">Pyrococcus furiosus (strain ATCC 43587 / DSM 3638 / JCM 8422 / Vc1)</name>
    <dbReference type="NCBI Taxonomy" id="186497"/>
    <lineage>
        <taxon>Archaea</taxon>
        <taxon>Methanobacteriati</taxon>
        <taxon>Methanobacteriota</taxon>
        <taxon>Thermococci</taxon>
        <taxon>Thermococcales</taxon>
        <taxon>Thermococcaceae</taxon>
        <taxon>Pyrococcus</taxon>
    </lineage>
</organism>
<accession>Q8TZE2</accession>